<comment type="function">
    <text evidence="2">Component of the ubiquinol-cytochrome c reductase complex (complex III or cytochrome b-c1 complex) that is part of the mitochondrial respiratory chain. The b-c1 complex mediates electron transfer from ubiquinol to cytochrome c. Contributes to the generation of a proton gradient across the mitochondrial membrane that is then used for ATP synthesis.</text>
</comment>
<comment type="cofactor">
    <cofactor evidence="2">
        <name>heme b</name>
        <dbReference type="ChEBI" id="CHEBI:60344"/>
    </cofactor>
    <text evidence="2">Binds 2 heme b groups non-covalently.</text>
</comment>
<comment type="subunit">
    <text evidence="2">The cytochrome bc1 complex contains 11 subunits: 3 respiratory subunits (MT-CYB, CYC1 and UQCRFS1), 2 core proteins (UQCRC1 and UQCRC2) and 6 low-molecular weight proteins (UQCRH/QCR6, UQCRB/QCR7, UQCRQ/QCR8, UQCR10/QCR9, UQCR11/QCR10 and a cleavage product of UQCRFS1). This cytochrome bc1 complex then forms a dimer.</text>
</comment>
<comment type="subcellular location">
    <subcellularLocation>
        <location evidence="2">Mitochondrion inner membrane</location>
        <topology evidence="2">Multi-pass membrane protein</topology>
    </subcellularLocation>
</comment>
<comment type="miscellaneous">
    <text evidence="1">Heme 1 (or BL or b562) is low-potential and absorbs at about 562 nm, and heme 2 (or BH or b566) is high-potential and absorbs at about 566 nm.</text>
</comment>
<comment type="similarity">
    <text evidence="3 4">Belongs to the cytochrome b family.</text>
</comment>
<comment type="caution">
    <text evidence="2">The full-length protein contains only eight transmembrane helices, not nine as predicted by bioinformatics tools.</text>
</comment>
<sequence>MALNLRKNHPLLKIINDSLIDLPTPSNISIWWNFGSLLGICLITQIITGLLLATHYTADTSLAFNSVAHMCRNVQFGWLIRNLHANGASLFFICIYLHIGRGFYYGSYLNKETWNIGVILLLILMATAFVGYVLPWGQMSFWGATVITNLFSAIPYIGQTLVEWAWGGFSVDNPTLTRFFALHFLLPFVIAGLTLVHLTFLHETGSNNPLGIPSDCDKIPFHPYYSIKDILGFALMLISLAALALFSPNLLGDPENFTPANPLATPPHIKPEWYFLFAYAILRSIPNKLGGVLALAASVLILFLIPLLHTSKQRSMTFRPLSQILFWILVTNLLILTWVGSQPVEHPFIIIGQLASFSYFTIILVLFPIVSVLENKLLNL</sequence>
<feature type="chain" id="PRO_0000061534" description="Cytochrome b">
    <location>
        <begin position="1"/>
        <end position="380"/>
    </location>
</feature>
<feature type="transmembrane region" description="Helical" evidence="2">
    <location>
        <begin position="34"/>
        <end position="54"/>
    </location>
</feature>
<feature type="transmembrane region" description="Helical" evidence="2">
    <location>
        <begin position="78"/>
        <end position="99"/>
    </location>
</feature>
<feature type="transmembrane region" description="Helical" evidence="2">
    <location>
        <begin position="114"/>
        <end position="134"/>
    </location>
</feature>
<feature type="transmembrane region" description="Helical" evidence="2">
    <location>
        <begin position="179"/>
        <end position="199"/>
    </location>
</feature>
<feature type="transmembrane region" description="Helical" evidence="2">
    <location>
        <begin position="227"/>
        <end position="247"/>
    </location>
</feature>
<feature type="transmembrane region" description="Helical" evidence="2">
    <location>
        <begin position="289"/>
        <end position="309"/>
    </location>
</feature>
<feature type="transmembrane region" description="Helical" evidence="2">
    <location>
        <begin position="321"/>
        <end position="341"/>
    </location>
</feature>
<feature type="transmembrane region" description="Helical" evidence="2">
    <location>
        <begin position="348"/>
        <end position="368"/>
    </location>
</feature>
<feature type="binding site" description="axial binding residue" evidence="2">
    <location>
        <position position="84"/>
    </location>
    <ligand>
        <name>heme b</name>
        <dbReference type="ChEBI" id="CHEBI:60344"/>
        <label>b562</label>
    </ligand>
    <ligandPart>
        <name>Fe</name>
        <dbReference type="ChEBI" id="CHEBI:18248"/>
    </ligandPart>
</feature>
<feature type="binding site" description="axial binding residue" evidence="2">
    <location>
        <position position="98"/>
    </location>
    <ligand>
        <name>heme b</name>
        <dbReference type="ChEBI" id="CHEBI:60344"/>
        <label>b566</label>
    </ligand>
    <ligandPart>
        <name>Fe</name>
        <dbReference type="ChEBI" id="CHEBI:18248"/>
    </ligandPart>
</feature>
<feature type="binding site" description="axial binding residue" evidence="2">
    <location>
        <position position="183"/>
    </location>
    <ligand>
        <name>heme b</name>
        <dbReference type="ChEBI" id="CHEBI:60344"/>
        <label>b562</label>
    </ligand>
    <ligandPart>
        <name>Fe</name>
        <dbReference type="ChEBI" id="CHEBI:18248"/>
    </ligandPart>
</feature>
<feature type="binding site" description="axial binding residue" evidence="2">
    <location>
        <position position="197"/>
    </location>
    <ligand>
        <name>heme b</name>
        <dbReference type="ChEBI" id="CHEBI:60344"/>
        <label>b566</label>
    </ligand>
    <ligandPart>
        <name>Fe</name>
        <dbReference type="ChEBI" id="CHEBI:18248"/>
    </ligandPart>
</feature>
<feature type="binding site" evidence="2">
    <location>
        <position position="202"/>
    </location>
    <ligand>
        <name>a ubiquinone</name>
        <dbReference type="ChEBI" id="CHEBI:16389"/>
    </ligand>
</feature>
<gene>
    <name type="primary">MT-CYB</name>
    <name type="synonym">COB</name>
    <name type="synonym">CYTB</name>
    <name type="synonym">MTCYB</name>
</gene>
<accession>Q35877</accession>
<dbReference type="EMBL" id="U15202">
    <property type="protein sequence ID" value="AAB38156.1"/>
    <property type="molecule type" value="Genomic_DNA"/>
</dbReference>
<dbReference type="SMR" id="Q35877"/>
<dbReference type="GO" id="GO:0005743">
    <property type="term" value="C:mitochondrial inner membrane"/>
    <property type="evidence" value="ECO:0007669"/>
    <property type="project" value="UniProtKB-SubCell"/>
</dbReference>
<dbReference type="GO" id="GO:0045275">
    <property type="term" value="C:respiratory chain complex III"/>
    <property type="evidence" value="ECO:0007669"/>
    <property type="project" value="InterPro"/>
</dbReference>
<dbReference type="GO" id="GO:0046872">
    <property type="term" value="F:metal ion binding"/>
    <property type="evidence" value="ECO:0007669"/>
    <property type="project" value="UniProtKB-KW"/>
</dbReference>
<dbReference type="GO" id="GO:0008121">
    <property type="term" value="F:ubiquinol-cytochrome-c reductase activity"/>
    <property type="evidence" value="ECO:0007669"/>
    <property type="project" value="InterPro"/>
</dbReference>
<dbReference type="GO" id="GO:0006122">
    <property type="term" value="P:mitochondrial electron transport, ubiquinol to cytochrome c"/>
    <property type="evidence" value="ECO:0007669"/>
    <property type="project" value="TreeGrafter"/>
</dbReference>
<dbReference type="CDD" id="cd00290">
    <property type="entry name" value="cytochrome_b_C"/>
    <property type="match status" value="1"/>
</dbReference>
<dbReference type="CDD" id="cd00284">
    <property type="entry name" value="Cytochrome_b_N"/>
    <property type="match status" value="1"/>
</dbReference>
<dbReference type="FunFam" id="1.20.810.10:FF:000002">
    <property type="entry name" value="Cytochrome b"/>
    <property type="match status" value="1"/>
</dbReference>
<dbReference type="Gene3D" id="1.20.810.10">
    <property type="entry name" value="Cytochrome Bc1 Complex, Chain C"/>
    <property type="match status" value="1"/>
</dbReference>
<dbReference type="InterPro" id="IPR005798">
    <property type="entry name" value="Cyt_b/b6_C"/>
</dbReference>
<dbReference type="InterPro" id="IPR036150">
    <property type="entry name" value="Cyt_b/b6_C_sf"/>
</dbReference>
<dbReference type="InterPro" id="IPR005797">
    <property type="entry name" value="Cyt_b/b6_N"/>
</dbReference>
<dbReference type="InterPro" id="IPR027387">
    <property type="entry name" value="Cytb/b6-like_sf"/>
</dbReference>
<dbReference type="InterPro" id="IPR030689">
    <property type="entry name" value="Cytochrome_b"/>
</dbReference>
<dbReference type="InterPro" id="IPR048260">
    <property type="entry name" value="Cytochrome_b_C_euk/bac"/>
</dbReference>
<dbReference type="InterPro" id="IPR048259">
    <property type="entry name" value="Cytochrome_b_N_euk/bac"/>
</dbReference>
<dbReference type="InterPro" id="IPR016174">
    <property type="entry name" value="Di-haem_cyt_TM"/>
</dbReference>
<dbReference type="PANTHER" id="PTHR19271">
    <property type="entry name" value="CYTOCHROME B"/>
    <property type="match status" value="1"/>
</dbReference>
<dbReference type="PANTHER" id="PTHR19271:SF16">
    <property type="entry name" value="CYTOCHROME B"/>
    <property type="match status" value="1"/>
</dbReference>
<dbReference type="Pfam" id="PF00032">
    <property type="entry name" value="Cytochrom_B_C"/>
    <property type="match status" value="1"/>
</dbReference>
<dbReference type="Pfam" id="PF00033">
    <property type="entry name" value="Cytochrome_B"/>
    <property type="match status" value="1"/>
</dbReference>
<dbReference type="PIRSF" id="PIRSF038885">
    <property type="entry name" value="COB"/>
    <property type="match status" value="1"/>
</dbReference>
<dbReference type="SUPFAM" id="SSF81648">
    <property type="entry name" value="a domain/subunit of cytochrome bc1 complex (Ubiquinol-cytochrome c reductase)"/>
    <property type="match status" value="1"/>
</dbReference>
<dbReference type="SUPFAM" id="SSF81342">
    <property type="entry name" value="Transmembrane di-heme cytochromes"/>
    <property type="match status" value="1"/>
</dbReference>
<dbReference type="PROSITE" id="PS51003">
    <property type="entry name" value="CYTB_CTER"/>
    <property type="match status" value="1"/>
</dbReference>
<dbReference type="PROSITE" id="PS51002">
    <property type="entry name" value="CYTB_NTER"/>
    <property type="match status" value="1"/>
</dbReference>
<organism>
    <name type="scientific">Seleucidis melanoleucus</name>
    <name type="common">Twelve-wired bird of paradise</name>
    <name type="synonym">Paradisea melanoleuca</name>
    <dbReference type="NCBI Taxonomy" id="36265"/>
    <lineage>
        <taxon>Eukaryota</taxon>
        <taxon>Metazoa</taxon>
        <taxon>Chordata</taxon>
        <taxon>Craniata</taxon>
        <taxon>Vertebrata</taxon>
        <taxon>Euteleostomi</taxon>
        <taxon>Archelosauria</taxon>
        <taxon>Archosauria</taxon>
        <taxon>Dinosauria</taxon>
        <taxon>Saurischia</taxon>
        <taxon>Theropoda</taxon>
        <taxon>Coelurosauria</taxon>
        <taxon>Aves</taxon>
        <taxon>Neognathae</taxon>
        <taxon>Neoaves</taxon>
        <taxon>Telluraves</taxon>
        <taxon>Australaves</taxon>
        <taxon>Passeriformes</taxon>
        <taxon>Corvoidea</taxon>
        <taxon>Paradisaeidae</taxon>
        <taxon>Seleucidis</taxon>
    </lineage>
</organism>
<geneLocation type="mitochondrion"/>
<protein>
    <recommendedName>
        <fullName>Cytochrome b</fullName>
    </recommendedName>
    <alternativeName>
        <fullName>Complex III subunit 3</fullName>
    </alternativeName>
    <alternativeName>
        <fullName>Complex III subunit III</fullName>
    </alternativeName>
    <alternativeName>
        <fullName>Cytochrome b-c1 complex subunit 3</fullName>
    </alternativeName>
    <alternativeName>
        <fullName>Ubiquinol-cytochrome-c reductase complex cytochrome b subunit</fullName>
    </alternativeName>
</protein>
<proteinExistence type="inferred from homology"/>
<keyword id="KW-0249">Electron transport</keyword>
<keyword id="KW-0349">Heme</keyword>
<keyword id="KW-0408">Iron</keyword>
<keyword id="KW-0472">Membrane</keyword>
<keyword id="KW-0479">Metal-binding</keyword>
<keyword id="KW-0496">Mitochondrion</keyword>
<keyword id="KW-0999">Mitochondrion inner membrane</keyword>
<keyword id="KW-0679">Respiratory chain</keyword>
<keyword id="KW-0812">Transmembrane</keyword>
<keyword id="KW-1133">Transmembrane helix</keyword>
<keyword id="KW-0813">Transport</keyword>
<keyword id="KW-0830">Ubiquinone</keyword>
<evidence type="ECO:0000250" key="1"/>
<evidence type="ECO:0000250" key="2">
    <source>
        <dbReference type="UniProtKB" id="P00157"/>
    </source>
</evidence>
<evidence type="ECO:0000255" key="3">
    <source>
        <dbReference type="PROSITE-ProRule" id="PRU00967"/>
    </source>
</evidence>
<evidence type="ECO:0000255" key="4">
    <source>
        <dbReference type="PROSITE-ProRule" id="PRU00968"/>
    </source>
</evidence>
<reference key="1">
    <citation type="journal article" date="1996" name="Mol. Phylogenet. Evol.">
        <title>Phylogenetic relationships among the major lineages of the birds-of-paradise (paradisaeidae) using mitochondrial DNA gene sequences.</title>
        <authorList>
            <person name="Nunn G.B."/>
            <person name="Cracraft J."/>
        </authorList>
    </citation>
    <scope>NUCLEOTIDE SEQUENCE [GENOMIC DNA]</scope>
</reference>
<name>CYB_SELME</name>